<proteinExistence type="evidence at protein level"/>
<name>PTSS_DROME</name>
<comment type="function">
    <text evidence="5">Catalyzes a base-exchange reaction in which the polar head group of phosphatidylethanolamine (PE) is replaced by L-serine.</text>
</comment>
<comment type="catalytic activity">
    <reaction evidence="5">
        <text>a 1,2-diacyl-sn-glycero-3-phosphoethanolamine + L-serine = a 1,2-diacyl-sn-glycero-3-phospho-L-serine + ethanolamine</text>
        <dbReference type="Rhea" id="RHEA:27606"/>
        <dbReference type="ChEBI" id="CHEBI:33384"/>
        <dbReference type="ChEBI" id="CHEBI:57262"/>
        <dbReference type="ChEBI" id="CHEBI:57603"/>
        <dbReference type="ChEBI" id="CHEBI:64612"/>
        <dbReference type="EC" id="2.7.8.29"/>
    </reaction>
</comment>
<comment type="pathway">
    <text evidence="5">Phospholipid metabolism; phosphatidylserine biosynthesis.</text>
</comment>
<comment type="subcellular location">
    <subcellularLocation>
        <location evidence="1">Endoplasmic reticulum membrane</location>
        <topology evidence="1">Multi-pass membrane protein</topology>
    </subcellularLocation>
</comment>
<comment type="alternative products">
    <event type="alternative splicing"/>
    <isoform>
        <id>Q9VPD3-1</id>
        <name evidence="10">A</name>
        <sequence type="displayed"/>
    </isoform>
    <isoform>
        <id>Q9VPD3-2</id>
        <name evidence="10">B</name>
        <sequence type="described" ref="VSP_060726"/>
    </isoform>
</comment>
<comment type="disruption phenotype">
    <text evidence="5">Lethal at the first instar larval stage (PubMed:31869331). RNAi-mediated knockdown in salivary glands reduces phosphatidylserine (PS) levels and depletes Akt1 from the plasma membrane contributing to cell growth defects probably by affecting the insulin pathway; causes a shift from phospholipid synthesis to neutral lipid synthesis, which results in ectopic lipid accumulation in third instar larval salivary glands; reduces mitochondrial PS levels thereby impairing mitochondrial protein import and mitochondrial integrity (PubMed:31869331).</text>
</comment>
<comment type="similarity">
    <text evidence="7">Belongs to the phosphatidyl serine synthase family.</text>
</comment>
<evidence type="ECO:0000250" key="1">
    <source>
        <dbReference type="UniProtKB" id="Q9Z1X2"/>
    </source>
</evidence>
<evidence type="ECO:0000255" key="2"/>
<evidence type="ECO:0000255" key="3">
    <source>
        <dbReference type="PROSITE-ProRule" id="PRU00498"/>
    </source>
</evidence>
<evidence type="ECO:0000256" key="4">
    <source>
        <dbReference type="SAM" id="MobiDB-lite"/>
    </source>
</evidence>
<evidence type="ECO:0000269" key="5">
    <source>
    </source>
</evidence>
<evidence type="ECO:0000303" key="6">
    <source>
    </source>
</evidence>
<evidence type="ECO:0000305" key="7"/>
<evidence type="ECO:0000305" key="8">
    <source>
    </source>
</evidence>
<evidence type="ECO:0000312" key="9">
    <source>
        <dbReference type="EMBL" id="AAL39547.1"/>
    </source>
</evidence>
<evidence type="ECO:0000312" key="10">
    <source>
        <dbReference type="FlyBase" id="FBgn0287585"/>
    </source>
</evidence>
<evidence type="ECO:0000312" key="11">
    <source>
        <dbReference type="Proteomes" id="UP000000803"/>
    </source>
</evidence>
<feature type="chain" id="PRO_0000450822" description="Phosphatidylserine synthase" evidence="7">
    <location>
        <begin position="1"/>
        <end position="498"/>
    </location>
</feature>
<feature type="topological domain" description="Cytoplasmic" evidence="7">
    <location>
        <begin position="1"/>
        <end position="92"/>
    </location>
</feature>
<feature type="transmembrane region" description="Helical" evidence="2">
    <location>
        <begin position="93"/>
        <end position="113"/>
    </location>
</feature>
<feature type="topological domain" description="Lumenal" evidence="7">
    <location>
        <begin position="114"/>
        <end position="122"/>
    </location>
</feature>
<feature type="transmembrane region" description="Helical" evidence="2">
    <location>
        <begin position="123"/>
        <end position="143"/>
    </location>
</feature>
<feature type="topological domain" description="Cytoplasmic" evidence="7">
    <location>
        <begin position="144"/>
        <end position="153"/>
    </location>
</feature>
<feature type="transmembrane region" description="Helical" evidence="2">
    <location>
        <begin position="154"/>
        <end position="174"/>
    </location>
</feature>
<feature type="topological domain" description="Lumenal" evidence="7">
    <location>
        <begin position="175"/>
        <end position="239"/>
    </location>
</feature>
<feature type="transmembrane region" description="Helical" evidence="2">
    <location>
        <begin position="240"/>
        <end position="260"/>
    </location>
</feature>
<feature type="topological domain" description="Cytoplasmic" evidence="7">
    <location>
        <begin position="261"/>
        <end position="266"/>
    </location>
</feature>
<feature type="transmembrane region" description="Helical" evidence="2">
    <location>
        <begin position="267"/>
        <end position="287"/>
    </location>
</feature>
<feature type="topological domain" description="Lumenal" evidence="7">
    <location>
        <begin position="288"/>
        <end position="339"/>
    </location>
</feature>
<feature type="transmembrane region" description="Helical" evidence="2">
    <location>
        <begin position="340"/>
        <end position="360"/>
    </location>
</feature>
<feature type="topological domain" description="Cytoplasmic" evidence="7">
    <location>
        <begin position="361"/>
        <end position="367"/>
    </location>
</feature>
<feature type="transmembrane region" description="Helical" evidence="2">
    <location>
        <begin position="368"/>
        <end position="388"/>
    </location>
</feature>
<feature type="topological domain" description="Lumenal" evidence="7">
    <location>
        <begin position="389"/>
        <end position="402"/>
    </location>
</feature>
<feature type="transmembrane region" description="Helical" evidence="2">
    <location>
        <begin position="403"/>
        <end position="423"/>
    </location>
</feature>
<feature type="topological domain" description="Cytoplasmic" evidence="7">
    <location>
        <begin position="424"/>
        <end position="436"/>
    </location>
</feature>
<feature type="transmembrane region" description="Helical" evidence="2">
    <location>
        <begin position="437"/>
        <end position="457"/>
    </location>
</feature>
<feature type="topological domain" description="Lumenal" evidence="7">
    <location>
        <begin position="458"/>
        <end position="498"/>
    </location>
</feature>
<feature type="region of interest" description="Disordered" evidence="4">
    <location>
        <begin position="1"/>
        <end position="65"/>
    </location>
</feature>
<feature type="region of interest" description="Disordered" evidence="4">
    <location>
        <begin position="465"/>
        <end position="498"/>
    </location>
</feature>
<feature type="compositionally biased region" description="Polar residues" evidence="4">
    <location>
        <begin position="7"/>
        <end position="25"/>
    </location>
</feature>
<feature type="compositionally biased region" description="Low complexity" evidence="4">
    <location>
        <begin position="478"/>
        <end position="490"/>
    </location>
</feature>
<feature type="glycosylation site" description="N-linked (GlcNAc...) asparagine" evidence="3">
    <location>
        <position position="205"/>
    </location>
</feature>
<feature type="splice variant" id="VSP_060726" description="In isoform B." evidence="8">
    <location>
        <position position="459"/>
    </location>
</feature>
<dbReference type="EC" id="2.7.8.29" evidence="5"/>
<dbReference type="EMBL" id="AE014296">
    <property type="protein sequence ID" value="AAF51622.1"/>
    <property type="molecule type" value="Genomic_DNA"/>
</dbReference>
<dbReference type="EMBL" id="AE014296">
    <property type="protein sequence ID" value="AGB94811.1"/>
    <property type="molecule type" value="Genomic_DNA"/>
</dbReference>
<dbReference type="EMBL" id="AY069402">
    <property type="protein sequence ID" value="AAL39547.1"/>
    <property type="molecule type" value="mRNA"/>
</dbReference>
<dbReference type="RefSeq" id="NP_001262118.1">
    <molecule id="Q9VPD3-2"/>
    <property type="nucleotide sequence ID" value="NM_001275189.1"/>
</dbReference>
<dbReference type="RefSeq" id="NP_649242.1">
    <molecule id="Q9VPD3-1"/>
    <property type="nucleotide sequence ID" value="NM_140985.4"/>
</dbReference>
<dbReference type="SMR" id="Q9VPD3"/>
<dbReference type="FunCoup" id="Q9VPD3">
    <property type="interactions" value="750"/>
</dbReference>
<dbReference type="STRING" id="7227.FBpp0077872"/>
<dbReference type="GlyCosmos" id="Q9VPD3">
    <property type="glycosylation" value="1 site, No reported glycans"/>
</dbReference>
<dbReference type="GlyGen" id="Q9VPD3">
    <property type="glycosylation" value="2 sites"/>
</dbReference>
<dbReference type="PaxDb" id="7227-FBpp0077872"/>
<dbReference type="DNASU" id="40281"/>
<dbReference type="EnsemblMetazoa" id="FBtr0078214">
    <molecule id="Q9VPD3-1"/>
    <property type="protein sequence ID" value="FBpp0077872"/>
    <property type="gene ID" value="FBgn0287585"/>
</dbReference>
<dbReference type="EnsemblMetazoa" id="FBtr0331566">
    <molecule id="Q9VPD3-2"/>
    <property type="protein sequence ID" value="FBpp0303956"/>
    <property type="gene ID" value="FBgn0287585"/>
</dbReference>
<dbReference type="GeneID" id="40281"/>
<dbReference type="KEGG" id="dme:Dmel_CG4825"/>
<dbReference type="UCSC" id="CG4825-RA">
    <molecule id="Q9VPD3-1"/>
    <property type="organism name" value="d. melanogaster"/>
</dbReference>
<dbReference type="AGR" id="FB:FBgn0287585"/>
<dbReference type="CTD" id="780904"/>
<dbReference type="FlyBase" id="FBgn0287585">
    <property type="gene designation" value="Pss"/>
</dbReference>
<dbReference type="VEuPathDB" id="VectorBase:FBgn0287585"/>
<dbReference type="eggNOG" id="KOG2735">
    <property type="taxonomic scope" value="Eukaryota"/>
</dbReference>
<dbReference type="GeneTree" id="ENSGT00530000063576"/>
<dbReference type="HOGENOM" id="CLU_037661_3_0_1"/>
<dbReference type="InParanoid" id="Q9VPD3"/>
<dbReference type="OMA" id="LPNFWEC"/>
<dbReference type="OrthoDB" id="10265393at2759"/>
<dbReference type="PhylomeDB" id="Q9VPD3"/>
<dbReference type="BRENDA" id="2.7.8.29">
    <property type="organism ID" value="1994"/>
</dbReference>
<dbReference type="Reactome" id="R-DME-1483101">
    <property type="pathway name" value="Synthesis of PS"/>
</dbReference>
<dbReference type="UniPathway" id="UPA00948"/>
<dbReference type="BioGRID-ORCS" id="40281">
    <property type="hits" value="0 hits in 3 CRISPR screens"/>
</dbReference>
<dbReference type="GenomeRNAi" id="40281"/>
<dbReference type="PRO" id="PR:Q9VPD3"/>
<dbReference type="Proteomes" id="UP000000803">
    <property type="component" value="Chromosome 3L"/>
</dbReference>
<dbReference type="ExpressionAtlas" id="Q9VPD3">
    <property type="expression patterns" value="baseline and differential"/>
</dbReference>
<dbReference type="GO" id="GO:0012505">
    <property type="term" value="C:endomembrane system"/>
    <property type="evidence" value="ECO:0007005"/>
    <property type="project" value="FlyBase"/>
</dbReference>
<dbReference type="GO" id="GO:0005789">
    <property type="term" value="C:endoplasmic reticulum membrane"/>
    <property type="evidence" value="ECO:0007669"/>
    <property type="project" value="UniProtKB-SubCell"/>
</dbReference>
<dbReference type="GO" id="GO:0106258">
    <property type="term" value="F:L-serine-phosphatidylcholine phosphatidyltransferase activity"/>
    <property type="evidence" value="ECO:0000250"/>
    <property type="project" value="FlyBase"/>
</dbReference>
<dbReference type="GO" id="GO:0106245">
    <property type="term" value="F:L-serine-phosphatidylethanolamine phosphatidyltransferase activity"/>
    <property type="evidence" value="ECO:0000250"/>
    <property type="project" value="FlyBase"/>
</dbReference>
<dbReference type="GO" id="GO:0016780">
    <property type="term" value="F:phosphotransferase activity, for other substituted phosphate groups"/>
    <property type="evidence" value="ECO:0000315"/>
    <property type="project" value="FlyBase"/>
</dbReference>
<dbReference type="GO" id="GO:0006659">
    <property type="term" value="P:phosphatidylserine biosynthetic process"/>
    <property type="evidence" value="ECO:0000315"/>
    <property type="project" value="FlyBase"/>
</dbReference>
<dbReference type="InterPro" id="IPR004277">
    <property type="entry name" value="PSS"/>
</dbReference>
<dbReference type="PANTHER" id="PTHR15362">
    <property type="entry name" value="PHOSPHATIDYLINOSITOL SYNTHASE"/>
    <property type="match status" value="1"/>
</dbReference>
<dbReference type="PANTHER" id="PTHR15362:SF15">
    <property type="entry name" value="PHOSPHATIDYLSERINE SYNTHASE 1"/>
    <property type="match status" value="1"/>
</dbReference>
<dbReference type="Pfam" id="PF03034">
    <property type="entry name" value="PSS"/>
    <property type="match status" value="1"/>
</dbReference>
<reference evidence="11" key="1">
    <citation type="journal article" date="2000" name="Science">
        <title>The genome sequence of Drosophila melanogaster.</title>
        <authorList>
            <person name="Adams M.D."/>
            <person name="Celniker S.E."/>
            <person name="Holt R.A."/>
            <person name="Evans C.A."/>
            <person name="Gocayne J.D."/>
            <person name="Amanatides P.G."/>
            <person name="Scherer S.E."/>
            <person name="Li P.W."/>
            <person name="Hoskins R.A."/>
            <person name="Galle R.F."/>
            <person name="George R.A."/>
            <person name="Lewis S.E."/>
            <person name="Richards S."/>
            <person name="Ashburner M."/>
            <person name="Henderson S.N."/>
            <person name="Sutton G.G."/>
            <person name="Wortman J.R."/>
            <person name="Yandell M.D."/>
            <person name="Zhang Q."/>
            <person name="Chen L.X."/>
            <person name="Brandon R.C."/>
            <person name="Rogers Y.-H.C."/>
            <person name="Blazej R.G."/>
            <person name="Champe M."/>
            <person name="Pfeiffer B.D."/>
            <person name="Wan K.H."/>
            <person name="Doyle C."/>
            <person name="Baxter E.G."/>
            <person name="Helt G."/>
            <person name="Nelson C.R."/>
            <person name="Miklos G.L.G."/>
            <person name="Abril J.F."/>
            <person name="Agbayani A."/>
            <person name="An H.-J."/>
            <person name="Andrews-Pfannkoch C."/>
            <person name="Baldwin D."/>
            <person name="Ballew R.M."/>
            <person name="Basu A."/>
            <person name="Baxendale J."/>
            <person name="Bayraktaroglu L."/>
            <person name="Beasley E.M."/>
            <person name="Beeson K.Y."/>
            <person name="Benos P.V."/>
            <person name="Berman B.P."/>
            <person name="Bhandari D."/>
            <person name="Bolshakov S."/>
            <person name="Borkova D."/>
            <person name="Botchan M.R."/>
            <person name="Bouck J."/>
            <person name="Brokstein P."/>
            <person name="Brottier P."/>
            <person name="Burtis K.C."/>
            <person name="Busam D.A."/>
            <person name="Butler H."/>
            <person name="Cadieu E."/>
            <person name="Center A."/>
            <person name="Chandra I."/>
            <person name="Cherry J.M."/>
            <person name="Cawley S."/>
            <person name="Dahlke C."/>
            <person name="Davenport L.B."/>
            <person name="Davies P."/>
            <person name="de Pablos B."/>
            <person name="Delcher A."/>
            <person name="Deng Z."/>
            <person name="Mays A.D."/>
            <person name="Dew I."/>
            <person name="Dietz S.M."/>
            <person name="Dodson K."/>
            <person name="Doup L.E."/>
            <person name="Downes M."/>
            <person name="Dugan-Rocha S."/>
            <person name="Dunkov B.C."/>
            <person name="Dunn P."/>
            <person name="Durbin K.J."/>
            <person name="Evangelista C.C."/>
            <person name="Ferraz C."/>
            <person name="Ferriera S."/>
            <person name="Fleischmann W."/>
            <person name="Fosler C."/>
            <person name="Gabrielian A.E."/>
            <person name="Garg N.S."/>
            <person name="Gelbart W.M."/>
            <person name="Glasser K."/>
            <person name="Glodek A."/>
            <person name="Gong F."/>
            <person name="Gorrell J.H."/>
            <person name="Gu Z."/>
            <person name="Guan P."/>
            <person name="Harris M."/>
            <person name="Harris N.L."/>
            <person name="Harvey D.A."/>
            <person name="Heiman T.J."/>
            <person name="Hernandez J.R."/>
            <person name="Houck J."/>
            <person name="Hostin D."/>
            <person name="Houston K.A."/>
            <person name="Howland T.J."/>
            <person name="Wei M.-H."/>
            <person name="Ibegwam C."/>
            <person name="Jalali M."/>
            <person name="Kalush F."/>
            <person name="Karpen G.H."/>
            <person name="Ke Z."/>
            <person name="Kennison J.A."/>
            <person name="Ketchum K.A."/>
            <person name="Kimmel B.E."/>
            <person name="Kodira C.D."/>
            <person name="Kraft C.L."/>
            <person name="Kravitz S."/>
            <person name="Kulp D."/>
            <person name="Lai Z."/>
            <person name="Lasko P."/>
            <person name="Lei Y."/>
            <person name="Levitsky A.A."/>
            <person name="Li J.H."/>
            <person name="Li Z."/>
            <person name="Liang Y."/>
            <person name="Lin X."/>
            <person name="Liu X."/>
            <person name="Mattei B."/>
            <person name="McIntosh T.C."/>
            <person name="McLeod M.P."/>
            <person name="McPherson D."/>
            <person name="Merkulov G."/>
            <person name="Milshina N.V."/>
            <person name="Mobarry C."/>
            <person name="Morris J."/>
            <person name="Moshrefi A."/>
            <person name="Mount S.M."/>
            <person name="Moy M."/>
            <person name="Murphy B."/>
            <person name="Murphy L."/>
            <person name="Muzny D.M."/>
            <person name="Nelson D.L."/>
            <person name="Nelson D.R."/>
            <person name="Nelson K.A."/>
            <person name="Nixon K."/>
            <person name="Nusskern D.R."/>
            <person name="Pacleb J.M."/>
            <person name="Palazzolo M."/>
            <person name="Pittman G.S."/>
            <person name="Pan S."/>
            <person name="Pollard J."/>
            <person name="Puri V."/>
            <person name="Reese M.G."/>
            <person name="Reinert K."/>
            <person name="Remington K."/>
            <person name="Saunders R.D.C."/>
            <person name="Scheeler F."/>
            <person name="Shen H."/>
            <person name="Shue B.C."/>
            <person name="Siden-Kiamos I."/>
            <person name="Simpson M."/>
            <person name="Skupski M.P."/>
            <person name="Smith T.J."/>
            <person name="Spier E."/>
            <person name="Spradling A.C."/>
            <person name="Stapleton M."/>
            <person name="Strong R."/>
            <person name="Sun E."/>
            <person name="Svirskas R."/>
            <person name="Tector C."/>
            <person name="Turner R."/>
            <person name="Venter E."/>
            <person name="Wang A.H."/>
            <person name="Wang X."/>
            <person name="Wang Z.-Y."/>
            <person name="Wassarman D.A."/>
            <person name="Weinstock G.M."/>
            <person name="Weissenbach J."/>
            <person name="Williams S.M."/>
            <person name="Woodage T."/>
            <person name="Worley K.C."/>
            <person name="Wu D."/>
            <person name="Yang S."/>
            <person name="Yao Q.A."/>
            <person name="Ye J."/>
            <person name="Yeh R.-F."/>
            <person name="Zaveri J.S."/>
            <person name="Zhan M."/>
            <person name="Zhang G."/>
            <person name="Zhao Q."/>
            <person name="Zheng L."/>
            <person name="Zheng X.H."/>
            <person name="Zhong F.N."/>
            <person name="Zhong W."/>
            <person name="Zhou X."/>
            <person name="Zhu S.C."/>
            <person name="Zhu X."/>
            <person name="Smith H.O."/>
            <person name="Gibbs R.A."/>
            <person name="Myers E.W."/>
            <person name="Rubin G.M."/>
            <person name="Venter J.C."/>
        </authorList>
    </citation>
    <scope>NUCLEOTIDE SEQUENCE [LARGE SCALE GENOMIC DNA]</scope>
    <scope>ALTERNATIVE SPLICING (ISOFORMS A AND B)</scope>
    <source>
        <strain evidence="11">Berkeley</strain>
    </source>
</reference>
<reference evidence="11" key="2">
    <citation type="journal article" date="2002" name="Genome Biol.">
        <title>Annotation of the Drosophila melanogaster euchromatic genome: a systematic review.</title>
        <authorList>
            <person name="Misra S."/>
            <person name="Crosby M.A."/>
            <person name="Mungall C.J."/>
            <person name="Matthews B.B."/>
            <person name="Campbell K.S."/>
            <person name="Hradecky P."/>
            <person name="Huang Y."/>
            <person name="Kaminker J.S."/>
            <person name="Millburn G.H."/>
            <person name="Prochnik S.E."/>
            <person name="Smith C.D."/>
            <person name="Tupy J.L."/>
            <person name="Whitfield E.J."/>
            <person name="Bayraktaroglu L."/>
            <person name="Berman B.P."/>
            <person name="Bettencourt B.R."/>
            <person name="Celniker S.E."/>
            <person name="de Grey A.D.N.J."/>
            <person name="Drysdale R.A."/>
            <person name="Harris N.L."/>
            <person name="Richter J."/>
            <person name="Russo S."/>
            <person name="Schroeder A.J."/>
            <person name="Shu S.Q."/>
            <person name="Stapleton M."/>
            <person name="Yamada C."/>
            <person name="Ashburner M."/>
            <person name="Gelbart W.M."/>
            <person name="Rubin G.M."/>
            <person name="Lewis S.E."/>
        </authorList>
    </citation>
    <scope>GENOME REANNOTATION</scope>
    <source>
        <strain evidence="11">Berkeley</strain>
    </source>
</reference>
<reference evidence="9" key="3">
    <citation type="journal article" date="2002" name="Genome Biol.">
        <title>A Drosophila full-length cDNA resource.</title>
        <authorList>
            <person name="Stapleton M."/>
            <person name="Carlson J.W."/>
            <person name="Brokstein P."/>
            <person name="Yu C."/>
            <person name="Champe M."/>
            <person name="George R.A."/>
            <person name="Guarin H."/>
            <person name="Kronmiller B."/>
            <person name="Pacleb J.M."/>
            <person name="Park S."/>
            <person name="Wan K.H."/>
            <person name="Rubin G.M."/>
            <person name="Celniker S.E."/>
        </authorList>
    </citation>
    <scope>NUCLEOTIDE SEQUENCE [LARGE SCALE MRNA] (ISOFORM A)</scope>
    <source>
        <strain evidence="9">Berkeley</strain>
        <tissue evidence="9">Embryo</tissue>
    </source>
</reference>
<reference evidence="7" key="4">
    <citation type="journal article" date="2019" name="PLoS Genet.">
        <title>Phosphatidylserine synthase regulates cellular homeostasis through distinct metabolic mechanisms.</title>
        <authorList>
            <person name="Yang X."/>
            <person name="Liang J."/>
            <person name="Ding L."/>
            <person name="Li X."/>
            <person name="Lam S.M."/>
            <person name="Shui G."/>
            <person name="Ding M."/>
            <person name="Huang X."/>
        </authorList>
    </citation>
    <scope>FUNCTION</scope>
    <scope>CATALYTIC ACTIVITY</scope>
    <scope>PATHWAY</scope>
    <scope>DISRUPTION PHENOTYPE</scope>
</reference>
<sequence length="498" mass="56835">MKKRTNSRGTPTSSGDALLDTSFSSAGDAERDHPAYKSGAASAPATPTKRRDGSDGSVSSAGARRKRKDEIAQTFVIVNERPVDDISLDFFYKPHTITLLAVSVLAVMYFAFVRNEANVDENLWAGLLCIVFFFLIVSVIAFPNGPFTRPHPAVWRILFGCSVLYLLTLQFLMFQNYPTIRSIFYWIDPKLKNFHIDMEKEYGVNCSDISWDRVKGHLDVFAWGHFLGWAFKAILIRHMGILWAISVMWEITEITFAHLLPNFIECWWDALILDVIICNGLGIWMGLKICQILEMREYKWASIKDISTTTGKIKRAMLQFTPESWSAIRWLDPKSTAMRFAAVIQLVIFWQVTELNTFFLKHIFEMPPDHFIVIGRLIFIGLFVAPSVRQYYVYVTDTRCKRVGTQCWVYGAIMVSEAILCIKNGKELFERTQAINIVLWLTVQVIISVAFVYLAVYWQQRQLKKVSSTPAKTKETIPASSSSPSKGKLSPQKEKKLK</sequence>
<accession>Q9VPD3</accession>
<accession>M9PIC3</accession>
<keyword id="KW-0025">Alternative splicing</keyword>
<keyword id="KW-0256">Endoplasmic reticulum</keyword>
<keyword id="KW-0325">Glycoprotein</keyword>
<keyword id="KW-0443">Lipid metabolism</keyword>
<keyword id="KW-0472">Membrane</keyword>
<keyword id="KW-1208">Phospholipid metabolism</keyword>
<keyword id="KW-1185">Reference proteome</keyword>
<keyword id="KW-0808">Transferase</keyword>
<keyword id="KW-0812">Transmembrane</keyword>
<keyword id="KW-1133">Transmembrane helix</keyword>
<gene>
    <name evidence="6 10" type="primary">Pss</name>
    <name evidence="10" type="synonym">l(3)77CDf</name>
    <name evidence="10" type="synonym">ptdss1</name>
    <name evidence="10" type="ORF">CG4825</name>
</gene>
<protein>
    <recommendedName>
        <fullName evidence="6 10">Phosphatidylserine synthase</fullName>
        <ecNumber evidence="5">2.7.8.29</ecNumber>
    </recommendedName>
</protein>
<organism evidence="11">
    <name type="scientific">Drosophila melanogaster</name>
    <name type="common">Fruit fly</name>
    <dbReference type="NCBI Taxonomy" id="7227"/>
    <lineage>
        <taxon>Eukaryota</taxon>
        <taxon>Metazoa</taxon>
        <taxon>Ecdysozoa</taxon>
        <taxon>Arthropoda</taxon>
        <taxon>Hexapoda</taxon>
        <taxon>Insecta</taxon>
        <taxon>Pterygota</taxon>
        <taxon>Neoptera</taxon>
        <taxon>Endopterygota</taxon>
        <taxon>Diptera</taxon>
        <taxon>Brachycera</taxon>
        <taxon>Muscomorpha</taxon>
        <taxon>Ephydroidea</taxon>
        <taxon>Drosophilidae</taxon>
        <taxon>Drosophila</taxon>
        <taxon>Sophophora</taxon>
    </lineage>
</organism>